<keyword id="KW-0903">Direct protein sequencing</keyword>
<keyword id="KW-1015">Disulfide bond</keyword>
<keyword id="KW-0166">Nematocyst</keyword>
<keyword id="KW-0646">Protease inhibitor</keyword>
<keyword id="KW-0964">Secreted</keyword>
<keyword id="KW-0722">Serine protease inhibitor</keyword>
<name>3CPI_HETMG</name>
<dbReference type="SMR" id="C0HK74"/>
<dbReference type="GO" id="GO:0005615">
    <property type="term" value="C:extracellular space"/>
    <property type="evidence" value="ECO:0007669"/>
    <property type="project" value="TreeGrafter"/>
</dbReference>
<dbReference type="GO" id="GO:0042151">
    <property type="term" value="C:nematocyst"/>
    <property type="evidence" value="ECO:0007669"/>
    <property type="project" value="UniProtKB-SubCell"/>
</dbReference>
<dbReference type="GO" id="GO:0004867">
    <property type="term" value="F:serine-type endopeptidase inhibitor activity"/>
    <property type="evidence" value="ECO:0007669"/>
    <property type="project" value="UniProtKB-KW"/>
</dbReference>
<dbReference type="CDD" id="cd22618">
    <property type="entry name" value="Kunitz_SHPI"/>
    <property type="match status" value="1"/>
</dbReference>
<dbReference type="FunFam" id="4.10.410.10:FF:000021">
    <property type="entry name" value="Serine protease inhibitor, putative"/>
    <property type="match status" value="1"/>
</dbReference>
<dbReference type="Gene3D" id="4.10.410.10">
    <property type="entry name" value="Pancreatic trypsin inhibitor Kunitz domain"/>
    <property type="match status" value="1"/>
</dbReference>
<dbReference type="InterPro" id="IPR002223">
    <property type="entry name" value="Kunitz_BPTI"/>
</dbReference>
<dbReference type="InterPro" id="IPR036880">
    <property type="entry name" value="Kunitz_BPTI_sf"/>
</dbReference>
<dbReference type="InterPro" id="IPR020901">
    <property type="entry name" value="Prtase_inh_Kunz-CS"/>
</dbReference>
<dbReference type="InterPro" id="IPR050098">
    <property type="entry name" value="TFPI/VKTCI-like"/>
</dbReference>
<dbReference type="PANTHER" id="PTHR10083:SF374">
    <property type="entry name" value="BPTI_KUNITZ INHIBITOR DOMAIN-CONTAINING PROTEIN"/>
    <property type="match status" value="1"/>
</dbReference>
<dbReference type="PANTHER" id="PTHR10083">
    <property type="entry name" value="KUNITZ-TYPE PROTEASE INHIBITOR-RELATED"/>
    <property type="match status" value="1"/>
</dbReference>
<dbReference type="Pfam" id="PF00014">
    <property type="entry name" value="Kunitz_BPTI"/>
    <property type="match status" value="1"/>
</dbReference>
<dbReference type="PRINTS" id="PR00759">
    <property type="entry name" value="BASICPTASE"/>
</dbReference>
<dbReference type="SMART" id="SM00131">
    <property type="entry name" value="KU"/>
    <property type="match status" value="1"/>
</dbReference>
<dbReference type="SUPFAM" id="SSF57362">
    <property type="entry name" value="BPTI-like"/>
    <property type="match status" value="1"/>
</dbReference>
<dbReference type="PROSITE" id="PS00280">
    <property type="entry name" value="BPTI_KUNITZ_1"/>
    <property type="match status" value="1"/>
</dbReference>
<dbReference type="PROSITE" id="PS50279">
    <property type="entry name" value="BPTI_KUNITZ_2"/>
    <property type="match status" value="1"/>
</dbReference>
<comment type="function">
    <text evidence="1">Serine protease inhibitor that inhibits trypsin (Ki=73.8 nM) and chymotrypsin (Ki=993 nM).</text>
</comment>
<comment type="subcellular location">
    <subcellularLocation>
        <location evidence="7">Secreted</location>
    </subcellularLocation>
    <subcellularLocation>
        <location evidence="6">Nematocyst</location>
    </subcellularLocation>
</comment>
<comment type="PTM">
    <text evidence="4">Contains three disulfide bonds.</text>
</comment>
<comment type="mass spectrometry" mass="6107.0" method="MALDI" evidence="4"/>
<comment type="miscellaneous">
    <text evidence="1">Does not inhibit potassium channels (Kv1.1/KCNA1, Kv1.2/KCNA2, Kv1.3/KCNA3, Kv1.4/KCNA4, Kv1.5/KCNA5, Kv1.6/KCNA6, Shaker, Kv2.1/KCNB1, Kv3.1/KCNC1, Kv4.2/KCND2, Kv4.3/KCND3, hERG/KCNH2) and TRPV1, the capsaicin receptors. Does not inhibit the serine proteases plasmin, thrombin, kallikrein, the cysteine proteinase papain, and the aspartic protease pepsin.</text>
</comment>
<comment type="miscellaneous">
    <text evidence="6">A synonymy between H.magnifica and R.crispa is controversial.</text>
</comment>
<comment type="similarity">
    <text evidence="6">Belongs to the venom Kunitz-type family. Sea anemone type 2 potassium channel toxin subfamily.</text>
</comment>
<feature type="peptide" id="PRO_0000443112" description="PI-stichotoxin-Hmg3c" evidence="4">
    <location>
        <begin position="1"/>
        <end position="56"/>
    </location>
</feature>
<feature type="domain" description="BPTI/Kunitz inhibitor" evidence="3">
    <location>
        <begin position="4"/>
        <end position="54"/>
    </location>
</feature>
<feature type="site" description="Reactive bond for trypsin" evidence="2">
    <location>
        <begin position="14"/>
        <end position="15"/>
    </location>
</feature>
<feature type="disulfide bond" evidence="3">
    <location>
        <begin position="4"/>
        <end position="54"/>
    </location>
</feature>
<feature type="disulfide bond" evidence="3">
    <location>
        <begin position="13"/>
        <end position="37"/>
    </location>
</feature>
<feature type="disulfide bond" evidence="3">
    <location>
        <begin position="29"/>
        <end position="50"/>
    </location>
</feature>
<accession>C0HK74</accession>
<evidence type="ECO:0000250" key="1">
    <source>
        <dbReference type="UniProtKB" id="P0DMJ5"/>
    </source>
</evidence>
<evidence type="ECO:0000250" key="2">
    <source>
        <dbReference type="UniProtKB" id="P31713"/>
    </source>
</evidence>
<evidence type="ECO:0000255" key="3">
    <source>
        <dbReference type="PROSITE-ProRule" id="PRU00031"/>
    </source>
</evidence>
<evidence type="ECO:0000269" key="4">
    <source>
    </source>
</evidence>
<evidence type="ECO:0000303" key="5">
    <source>
    </source>
</evidence>
<evidence type="ECO:0000305" key="6"/>
<evidence type="ECO:0000305" key="7">
    <source>
    </source>
</evidence>
<protein>
    <recommendedName>
        <fullName evidence="6">PI-stichotoxin-Hmg3c</fullName>
        <shortName evidence="6">PI-SHTX-Hmg3c</shortName>
    </recommendedName>
    <alternativeName>
        <fullName evidence="5">Kunitz-type serine protease inhibitor HMGS2</fullName>
    </alternativeName>
</protein>
<proteinExistence type="evidence at protein level"/>
<organism evidence="5">
    <name type="scientific">Heteractis magnifica</name>
    <name type="common">Magnificent sea anemone</name>
    <name type="synonym">Radianthus magnifica</name>
    <dbReference type="NCBI Taxonomy" id="38281"/>
    <lineage>
        <taxon>Eukaryota</taxon>
        <taxon>Metazoa</taxon>
        <taxon>Cnidaria</taxon>
        <taxon>Anthozoa</taxon>
        <taxon>Hexacorallia</taxon>
        <taxon>Actiniaria</taxon>
        <taxon>Stichodactylidae</taxon>
        <taxon>Heteractis</taxon>
    </lineage>
</organism>
<reference evidence="6" key="1">
    <citation type="journal article" date="2018" name="J. Proteomics">
        <title>Peptide fingerprinting of the sea anemone Heteractis magnifica mucus revealed neurotoxins, Kunitz-type proteinase inhibitors and a new beta-defensin alpha-amylase inhibitor.</title>
        <authorList>
            <person name="Sintsova O."/>
            <person name="Gladkikh I."/>
            <person name="Chausova V."/>
            <person name="Monastyrnaya M."/>
            <person name="Anastyuk S."/>
            <person name="Chernikov O."/>
            <person name="Yurchenko E."/>
            <person name="Aminin D."/>
            <person name="Isaeva M."/>
            <person name="Leychenko E."/>
            <person name="Kozlovskaya E."/>
        </authorList>
    </citation>
    <scope>PROTEIN SEQUENCE</scope>
    <scope>FUNCTION</scope>
    <scope>MASS SPECTROMETRY</scope>
    <scope>PRESENCE OF DISULFIDE BONDS</scope>
</reference>
<sequence length="56" mass="6113">GSICLEPKVVGPCTAYFPRFYFDSETGKCTPFIYGGCEGNGNNFETLHACRAICRA</sequence>